<comment type="similarity">
    <text evidence="1">Belongs to the universal ribosomal protein uL16 family.</text>
</comment>
<evidence type="ECO:0000255" key="1">
    <source>
        <dbReference type="HAMAP-Rule" id="MF_00448"/>
    </source>
</evidence>
<evidence type="ECO:0000305" key="2"/>
<dbReference type="EMBL" id="CP000852">
    <property type="protein sequence ID" value="ABW01800.1"/>
    <property type="molecule type" value="Genomic_DNA"/>
</dbReference>
<dbReference type="RefSeq" id="WP_012186019.1">
    <property type="nucleotide sequence ID" value="NC_009954.1"/>
</dbReference>
<dbReference type="SMR" id="A8MDE4"/>
<dbReference type="STRING" id="397948.Cmaq_0968"/>
<dbReference type="GeneID" id="5708590"/>
<dbReference type="KEGG" id="cma:Cmaq_0968"/>
<dbReference type="eggNOG" id="arCOG04113">
    <property type="taxonomic scope" value="Archaea"/>
</dbReference>
<dbReference type="HOGENOM" id="CLU_084051_0_2_2"/>
<dbReference type="OrthoDB" id="30538at2157"/>
<dbReference type="Proteomes" id="UP000001137">
    <property type="component" value="Chromosome"/>
</dbReference>
<dbReference type="GO" id="GO:1990904">
    <property type="term" value="C:ribonucleoprotein complex"/>
    <property type="evidence" value="ECO:0007669"/>
    <property type="project" value="UniProtKB-KW"/>
</dbReference>
<dbReference type="GO" id="GO:0005840">
    <property type="term" value="C:ribosome"/>
    <property type="evidence" value="ECO:0007669"/>
    <property type="project" value="UniProtKB-KW"/>
</dbReference>
<dbReference type="GO" id="GO:0003735">
    <property type="term" value="F:structural constituent of ribosome"/>
    <property type="evidence" value="ECO:0007669"/>
    <property type="project" value="InterPro"/>
</dbReference>
<dbReference type="GO" id="GO:0006412">
    <property type="term" value="P:translation"/>
    <property type="evidence" value="ECO:0007669"/>
    <property type="project" value="UniProtKB-UniRule"/>
</dbReference>
<dbReference type="Gene3D" id="3.90.1170.10">
    <property type="entry name" value="Ribosomal protein L10e/L16"/>
    <property type="match status" value="1"/>
</dbReference>
<dbReference type="HAMAP" id="MF_00448">
    <property type="entry name" value="Ribosomal_uL16_arch"/>
    <property type="match status" value="1"/>
</dbReference>
<dbReference type="InterPro" id="IPR047873">
    <property type="entry name" value="Ribosomal_uL16"/>
</dbReference>
<dbReference type="InterPro" id="IPR022981">
    <property type="entry name" value="Ribosomal_uL16_arc"/>
</dbReference>
<dbReference type="InterPro" id="IPR001197">
    <property type="entry name" value="Ribosomal_uL16_euk_arch"/>
</dbReference>
<dbReference type="InterPro" id="IPR036920">
    <property type="entry name" value="Ribosomal_uL16_sf"/>
</dbReference>
<dbReference type="NCBIfam" id="NF003239">
    <property type="entry name" value="PRK04199.1-4"/>
    <property type="match status" value="1"/>
</dbReference>
<dbReference type="PANTHER" id="PTHR11726">
    <property type="entry name" value="60S RIBOSOMAL PROTEIN L10"/>
    <property type="match status" value="1"/>
</dbReference>
<dbReference type="Pfam" id="PF00252">
    <property type="entry name" value="Ribosomal_L16"/>
    <property type="match status" value="1"/>
</dbReference>
<dbReference type="PIRSF" id="PIRSF005590">
    <property type="entry name" value="Ribosomal_L10"/>
    <property type="match status" value="1"/>
</dbReference>
<dbReference type="SUPFAM" id="SSF54686">
    <property type="entry name" value="Ribosomal protein L16p/L10e"/>
    <property type="match status" value="1"/>
</dbReference>
<gene>
    <name evidence="1" type="primary">rpl10e</name>
    <name type="ordered locus">Cmaq_0968</name>
</gene>
<proteinExistence type="inferred from homology"/>
<keyword id="KW-1185">Reference proteome</keyword>
<keyword id="KW-0687">Ribonucleoprotein</keyword>
<keyword id="KW-0689">Ribosomal protein</keyword>
<name>RL10E_CALMQ</name>
<feature type="chain" id="PRO_1000080951" description="Large ribosomal subunit protein uL16">
    <location>
        <begin position="1"/>
        <end position="175"/>
    </location>
</feature>
<protein>
    <recommendedName>
        <fullName evidence="1">Large ribosomal subunit protein uL16</fullName>
    </recommendedName>
    <alternativeName>
        <fullName evidence="2">50S ribosomal protein L10e</fullName>
    </alternativeName>
</protein>
<reference key="1">
    <citation type="submission" date="2007-10" db="EMBL/GenBank/DDBJ databases">
        <title>Complete sequence of Caldivirga maquilingensis IC-167.</title>
        <authorList>
            <consortium name="US DOE Joint Genome Institute"/>
            <person name="Copeland A."/>
            <person name="Lucas S."/>
            <person name="Lapidus A."/>
            <person name="Barry K."/>
            <person name="Glavina del Rio T."/>
            <person name="Dalin E."/>
            <person name="Tice H."/>
            <person name="Pitluck S."/>
            <person name="Saunders E."/>
            <person name="Brettin T."/>
            <person name="Bruce D."/>
            <person name="Detter J.C."/>
            <person name="Han C."/>
            <person name="Schmutz J."/>
            <person name="Larimer F."/>
            <person name="Land M."/>
            <person name="Hauser L."/>
            <person name="Kyrpides N."/>
            <person name="Ivanova N."/>
            <person name="Biddle J.F."/>
            <person name="Zhang Z."/>
            <person name="Fitz-Gibbon S.T."/>
            <person name="Lowe T.M."/>
            <person name="Saltikov C."/>
            <person name="House C.H."/>
            <person name="Richardson P."/>
        </authorList>
    </citation>
    <scope>NUCLEOTIDE SEQUENCE [LARGE SCALE GENOMIC DNA]</scope>
    <source>
        <strain>ATCC 700844 / DSM 13496 / JCM 10307 / IC-167</strain>
    </source>
</reference>
<organism>
    <name type="scientific">Caldivirga maquilingensis (strain ATCC 700844 / DSM 13496 / JCM 10307 / IC-167)</name>
    <dbReference type="NCBI Taxonomy" id="397948"/>
    <lineage>
        <taxon>Archaea</taxon>
        <taxon>Thermoproteota</taxon>
        <taxon>Thermoprotei</taxon>
        <taxon>Thermoproteales</taxon>
        <taxon>Thermoproteaceae</taxon>
        <taxon>Caldivirga</taxon>
    </lineage>
</organism>
<sequence length="175" mass="20114">MPLRPARCYKRIKRPYTRLKYIHGAPYVQIPRFEMGATKAKDRERFTSVAVLRVLEGGQIRVNALEAARQMAYKYLSKVLTDQNFYLKIIKYPHHVIRENKMLAMAGADRLQEGMRLAFGVPTGRAIQIEPGEVLMIVEVEDRNITHAKEALNRARAKLPLPCRIELTRKSVIKG</sequence>
<accession>A8MDE4</accession>